<keyword id="KW-0028">Amino-acid biosynthesis</keyword>
<keyword id="KW-0963">Cytoplasm</keyword>
<keyword id="KW-0315">Glutamine amidotransferase</keyword>
<keyword id="KW-0368">Histidine biosynthesis</keyword>
<keyword id="KW-0378">Hydrolase</keyword>
<keyword id="KW-0456">Lyase</keyword>
<keyword id="KW-1185">Reference proteome</keyword>
<comment type="function">
    <text evidence="1">IGPS catalyzes the conversion of PRFAR and glutamine to IGP, AICAR and glutamate. The HisH subunit catalyzes the hydrolysis of glutamine to glutamate and ammonia as part of the synthesis of IGP and AICAR. The resulting ammonia molecule is channeled to the active site of HisF.</text>
</comment>
<comment type="catalytic activity">
    <reaction evidence="1">
        <text>5-[(5-phospho-1-deoxy-D-ribulos-1-ylimino)methylamino]-1-(5-phospho-beta-D-ribosyl)imidazole-4-carboxamide + L-glutamine = D-erythro-1-(imidazol-4-yl)glycerol 3-phosphate + 5-amino-1-(5-phospho-beta-D-ribosyl)imidazole-4-carboxamide + L-glutamate + H(+)</text>
        <dbReference type="Rhea" id="RHEA:24793"/>
        <dbReference type="ChEBI" id="CHEBI:15378"/>
        <dbReference type="ChEBI" id="CHEBI:29985"/>
        <dbReference type="ChEBI" id="CHEBI:58278"/>
        <dbReference type="ChEBI" id="CHEBI:58359"/>
        <dbReference type="ChEBI" id="CHEBI:58475"/>
        <dbReference type="ChEBI" id="CHEBI:58525"/>
        <dbReference type="EC" id="4.3.2.10"/>
    </reaction>
</comment>
<comment type="catalytic activity">
    <reaction evidence="1">
        <text>L-glutamine + H2O = L-glutamate + NH4(+)</text>
        <dbReference type="Rhea" id="RHEA:15889"/>
        <dbReference type="ChEBI" id="CHEBI:15377"/>
        <dbReference type="ChEBI" id="CHEBI:28938"/>
        <dbReference type="ChEBI" id="CHEBI:29985"/>
        <dbReference type="ChEBI" id="CHEBI:58359"/>
        <dbReference type="EC" id="3.5.1.2"/>
    </reaction>
</comment>
<comment type="pathway">
    <text evidence="1">Amino-acid biosynthesis; L-histidine biosynthesis; L-histidine from 5-phospho-alpha-D-ribose 1-diphosphate: step 5/9.</text>
</comment>
<comment type="subunit">
    <text evidence="1">Heterodimer of HisH and HisF.</text>
</comment>
<comment type="subcellular location">
    <subcellularLocation>
        <location evidence="1">Cytoplasm</location>
    </subcellularLocation>
</comment>
<organism>
    <name type="scientific">Caldanaerobacter subterraneus subsp. tengcongensis (strain DSM 15242 / JCM 11007 / NBRC 100824 / MB4)</name>
    <name type="common">Thermoanaerobacter tengcongensis</name>
    <dbReference type="NCBI Taxonomy" id="273068"/>
    <lineage>
        <taxon>Bacteria</taxon>
        <taxon>Bacillati</taxon>
        <taxon>Bacillota</taxon>
        <taxon>Clostridia</taxon>
        <taxon>Thermoanaerobacterales</taxon>
        <taxon>Thermoanaerobacteraceae</taxon>
        <taxon>Caldanaerobacter</taxon>
    </lineage>
</organism>
<protein>
    <recommendedName>
        <fullName evidence="1">Imidazole glycerol phosphate synthase subunit HisH</fullName>
        <ecNumber evidence="1">4.3.2.10</ecNumber>
    </recommendedName>
    <alternativeName>
        <fullName evidence="1">IGP synthase glutaminase subunit</fullName>
        <ecNumber evidence="1">3.5.1.2</ecNumber>
    </alternativeName>
    <alternativeName>
        <fullName evidence="1">IGP synthase subunit HisH</fullName>
    </alternativeName>
    <alternativeName>
        <fullName evidence="1">ImGP synthase subunit HisH</fullName>
        <shortName evidence="1">IGPS subunit HisH</shortName>
    </alternativeName>
</protein>
<gene>
    <name evidence="1" type="primary">hisH</name>
    <name type="ordered locus">TTE2135</name>
</gene>
<evidence type="ECO:0000255" key="1">
    <source>
        <dbReference type="HAMAP-Rule" id="MF_00278"/>
    </source>
</evidence>
<name>HIS5_CALS4</name>
<reference key="1">
    <citation type="journal article" date="2002" name="Genome Res.">
        <title>A complete sequence of the T. tengcongensis genome.</title>
        <authorList>
            <person name="Bao Q."/>
            <person name="Tian Y."/>
            <person name="Li W."/>
            <person name="Xu Z."/>
            <person name="Xuan Z."/>
            <person name="Hu S."/>
            <person name="Dong W."/>
            <person name="Yang J."/>
            <person name="Chen Y."/>
            <person name="Xue Y."/>
            <person name="Xu Y."/>
            <person name="Lai X."/>
            <person name="Huang L."/>
            <person name="Dong X."/>
            <person name="Ma Y."/>
            <person name="Ling L."/>
            <person name="Tan H."/>
            <person name="Chen R."/>
            <person name="Wang J."/>
            <person name="Yu J."/>
            <person name="Yang H."/>
        </authorList>
    </citation>
    <scope>NUCLEOTIDE SEQUENCE [LARGE SCALE GENOMIC DNA]</scope>
    <source>
        <strain>DSM 15242 / JCM 11007 / NBRC 100824 / MB4</strain>
    </source>
</reference>
<dbReference type="EC" id="4.3.2.10" evidence="1"/>
<dbReference type="EC" id="3.5.1.2" evidence="1"/>
<dbReference type="EMBL" id="AE008691">
    <property type="protein sequence ID" value="AAM25300.1"/>
    <property type="molecule type" value="Genomic_DNA"/>
</dbReference>
<dbReference type="RefSeq" id="WP_009610410.1">
    <property type="nucleotide sequence ID" value="NZ_JANUCV010000001.1"/>
</dbReference>
<dbReference type="SMR" id="Q8R883"/>
<dbReference type="STRING" id="273068.TTE2135"/>
<dbReference type="KEGG" id="tte:TTE2135"/>
<dbReference type="eggNOG" id="COG0118">
    <property type="taxonomic scope" value="Bacteria"/>
</dbReference>
<dbReference type="HOGENOM" id="CLU_071837_2_2_9"/>
<dbReference type="OrthoDB" id="9807137at2"/>
<dbReference type="UniPathway" id="UPA00031">
    <property type="reaction ID" value="UER00010"/>
</dbReference>
<dbReference type="Proteomes" id="UP000000555">
    <property type="component" value="Chromosome"/>
</dbReference>
<dbReference type="GO" id="GO:0005737">
    <property type="term" value="C:cytoplasm"/>
    <property type="evidence" value="ECO:0007669"/>
    <property type="project" value="UniProtKB-SubCell"/>
</dbReference>
<dbReference type="GO" id="GO:0004359">
    <property type="term" value="F:glutaminase activity"/>
    <property type="evidence" value="ECO:0007669"/>
    <property type="project" value="UniProtKB-EC"/>
</dbReference>
<dbReference type="GO" id="GO:0000107">
    <property type="term" value="F:imidazoleglycerol-phosphate synthase activity"/>
    <property type="evidence" value="ECO:0007669"/>
    <property type="project" value="UniProtKB-UniRule"/>
</dbReference>
<dbReference type="GO" id="GO:0016829">
    <property type="term" value="F:lyase activity"/>
    <property type="evidence" value="ECO:0007669"/>
    <property type="project" value="UniProtKB-KW"/>
</dbReference>
<dbReference type="GO" id="GO:0000105">
    <property type="term" value="P:L-histidine biosynthetic process"/>
    <property type="evidence" value="ECO:0007669"/>
    <property type="project" value="UniProtKB-UniRule"/>
</dbReference>
<dbReference type="CDD" id="cd01748">
    <property type="entry name" value="GATase1_IGP_Synthase"/>
    <property type="match status" value="1"/>
</dbReference>
<dbReference type="Gene3D" id="3.40.50.880">
    <property type="match status" value="1"/>
</dbReference>
<dbReference type="HAMAP" id="MF_00278">
    <property type="entry name" value="HisH"/>
    <property type="match status" value="1"/>
</dbReference>
<dbReference type="InterPro" id="IPR029062">
    <property type="entry name" value="Class_I_gatase-like"/>
</dbReference>
<dbReference type="InterPro" id="IPR017926">
    <property type="entry name" value="GATASE"/>
</dbReference>
<dbReference type="InterPro" id="IPR010139">
    <property type="entry name" value="Imidazole-glycPsynth_HisH"/>
</dbReference>
<dbReference type="NCBIfam" id="TIGR01855">
    <property type="entry name" value="IMP_synth_hisH"/>
    <property type="match status" value="1"/>
</dbReference>
<dbReference type="PANTHER" id="PTHR42701">
    <property type="entry name" value="IMIDAZOLE GLYCEROL PHOSPHATE SYNTHASE SUBUNIT HISH"/>
    <property type="match status" value="1"/>
</dbReference>
<dbReference type="PANTHER" id="PTHR42701:SF1">
    <property type="entry name" value="IMIDAZOLE GLYCEROL PHOSPHATE SYNTHASE SUBUNIT HISH"/>
    <property type="match status" value="1"/>
</dbReference>
<dbReference type="Pfam" id="PF00117">
    <property type="entry name" value="GATase"/>
    <property type="match status" value="1"/>
</dbReference>
<dbReference type="PIRSF" id="PIRSF000495">
    <property type="entry name" value="Amidotransf_hisH"/>
    <property type="match status" value="1"/>
</dbReference>
<dbReference type="SUPFAM" id="SSF52317">
    <property type="entry name" value="Class I glutamine amidotransferase-like"/>
    <property type="match status" value="1"/>
</dbReference>
<dbReference type="PROSITE" id="PS51273">
    <property type="entry name" value="GATASE_TYPE_1"/>
    <property type="match status" value="1"/>
</dbReference>
<proteinExistence type="inferred from homology"/>
<accession>Q8R883</accession>
<sequence length="203" mass="22545">MIGIIDYGMGNLRSVEKALKYVGYDAKITSDAKEIKNFEALILPGVGAFPDAIRVLIKTGMAEEIKIHIEKGKPFLGICLGMQLLFEKSFEGGKTEGLKIFKGNVVGLPKGNKIPHVGWNSLTIKKDTPFLKGIKNGDYVYFVHSYYVNGNEKDFEYAVTEYGIEIPAVIIKDNVFSCQFHPEKSGETGLKILKNFGEMIKCL</sequence>
<feature type="chain" id="PRO_0000152440" description="Imidazole glycerol phosphate synthase subunit HisH">
    <location>
        <begin position="1"/>
        <end position="203"/>
    </location>
</feature>
<feature type="domain" description="Glutamine amidotransferase type-1" evidence="1">
    <location>
        <begin position="1"/>
        <end position="203"/>
    </location>
</feature>
<feature type="active site" description="Nucleophile" evidence="1">
    <location>
        <position position="79"/>
    </location>
</feature>
<feature type="active site" evidence="1">
    <location>
        <position position="181"/>
    </location>
</feature>
<feature type="active site" evidence="1">
    <location>
        <position position="183"/>
    </location>
</feature>